<comment type="function">
    <text evidence="1">Transcription factor; part of the gene cluster that mediates the biosynthesis of iso-A82775C, a enylepoxycyclohexane and biosynthetic precursor of the chloropestolide anticancer natural products.</text>
</comment>
<comment type="subcellular location">
    <subcellularLocation>
        <location evidence="4">Nucleus</location>
    </subcellularLocation>
</comment>
<comment type="biotechnology">
    <text evidence="1">Iso-A82775C is a precursor for the biosynthesis of the anticancer natural products chloropestolides A to E via a Diesls-Alder reaction with maldoxin (PubMed:29384350). In the absence of the prenyltransferase iacE, siccayne accumulates instead of iso-A82775C and can also be condensed with maldoxin to produce chloropestolides H to K, which show also antibacterial and anticancer properties (PubMed:29384350).</text>
</comment>
<comment type="sequence caution" evidence="3">
    <conflict type="erroneous initiation">
        <sequence resource="EMBL-CDS" id="ETS86021"/>
    </conflict>
    <text>Extended N-terminus.</text>
</comment>
<name>IACI_PESFW</name>
<evidence type="ECO:0000269" key="1">
    <source>
    </source>
</evidence>
<evidence type="ECO:0000303" key="2">
    <source>
    </source>
</evidence>
<evidence type="ECO:0000305" key="3"/>
<evidence type="ECO:0000305" key="4">
    <source>
    </source>
</evidence>
<keyword id="KW-0539">Nucleus</keyword>
<keyword id="KW-1185">Reference proteome</keyword>
<keyword id="KW-0804">Transcription</keyword>
<keyword id="KW-0805">Transcription regulation</keyword>
<feature type="chain" id="PRO_0000451382" description="Transcription factor iacI">
    <location>
        <begin position="1"/>
        <end position="384"/>
    </location>
</feature>
<protein>
    <recommendedName>
        <fullName evidence="2">Transcription factor iacI</fullName>
    </recommendedName>
    <alternativeName>
        <fullName evidence="2">Iso-A82775C biosynthesis cluster protein I</fullName>
    </alternativeName>
</protein>
<proteinExistence type="evidence at protein level"/>
<organism>
    <name type="scientific">Pestalotiopsis fici (strain W106-1 / CGMCC3.15140)</name>
    <dbReference type="NCBI Taxonomy" id="1229662"/>
    <lineage>
        <taxon>Eukaryota</taxon>
        <taxon>Fungi</taxon>
        <taxon>Dikarya</taxon>
        <taxon>Ascomycota</taxon>
        <taxon>Pezizomycotina</taxon>
        <taxon>Sordariomycetes</taxon>
        <taxon>Xylariomycetidae</taxon>
        <taxon>Amphisphaeriales</taxon>
        <taxon>Sporocadaceae</taxon>
        <taxon>Pestalotiopsis</taxon>
    </lineage>
</organism>
<sequence>MSLLDLPTLWNASGVEALDSDLFEYFCCVASGSLPTFGHDATALRNILVRTALEGETASAAAVLQALLAFSSLHRYGLQPQALELKITALGSLAKGSFTPGLGTKETIEHIAAGMLLSSFEVHQSSCTSGHWTGYLGGVKTITDMSSVKTLLQFSSDVAVLLDWVHYHNVLARFSLLYWNGEETSEFPSTPTNLLSSQDSSLPPPIYSMMDLLSQICDLSNSAIPTGTSDEVDNYKGFLKVLDWRIRSLPIKGDNDGEMLLMKLYQLALLLFLNRSFEGLIDQPIRMQQQIGQAFAILPRLSSCRQQFPIYVIGCEARTDEQRAAVLDLITKTEKMSTSRSFNHCRTLLQAVWTQDDLAEWDDISYRAKLTLVISRCAVAPIFV</sequence>
<gene>
    <name evidence="2" type="primary">iacI</name>
    <name type="ORF">PFICI_04046</name>
</gene>
<accession>A0A1J0HSR1</accession>
<accession>W3XL73</accession>
<dbReference type="EMBL" id="KU963195">
    <property type="protein sequence ID" value="APC57600.1"/>
    <property type="molecule type" value="Genomic_DNA"/>
</dbReference>
<dbReference type="EMBL" id="KI912110">
    <property type="protein sequence ID" value="ETS86021.1"/>
    <property type="status" value="ALT_INIT"/>
    <property type="molecule type" value="Genomic_DNA"/>
</dbReference>
<dbReference type="RefSeq" id="XP_007830818.1">
    <property type="nucleotide sequence ID" value="XM_007832627.1"/>
</dbReference>
<dbReference type="GeneID" id="19269059"/>
<dbReference type="KEGG" id="pfy:PFICI_04046"/>
<dbReference type="eggNOG" id="ENOG502SNVB">
    <property type="taxonomic scope" value="Eukaryota"/>
</dbReference>
<dbReference type="HOGENOM" id="CLU_015493_0_0_1"/>
<dbReference type="InParanoid" id="A0A1J0HSR1"/>
<dbReference type="OrthoDB" id="5130013at2759"/>
<dbReference type="Proteomes" id="UP000030651">
    <property type="component" value="Unassembled WGS sequence"/>
</dbReference>
<dbReference type="GO" id="GO:0005634">
    <property type="term" value="C:nucleus"/>
    <property type="evidence" value="ECO:0007669"/>
    <property type="project" value="UniProtKB-SubCell"/>
</dbReference>
<dbReference type="GO" id="GO:0003700">
    <property type="term" value="F:DNA-binding transcription factor activity"/>
    <property type="evidence" value="ECO:0007669"/>
    <property type="project" value="TreeGrafter"/>
</dbReference>
<dbReference type="GO" id="GO:0000976">
    <property type="term" value="F:transcription cis-regulatory region binding"/>
    <property type="evidence" value="ECO:0007669"/>
    <property type="project" value="TreeGrafter"/>
</dbReference>
<dbReference type="GO" id="GO:0045944">
    <property type="term" value="P:positive regulation of transcription by RNA polymerase II"/>
    <property type="evidence" value="ECO:0007669"/>
    <property type="project" value="TreeGrafter"/>
</dbReference>
<dbReference type="InterPro" id="IPR021858">
    <property type="entry name" value="Fun_TF"/>
</dbReference>
<dbReference type="PANTHER" id="PTHR37534:SF39">
    <property type="entry name" value="TRANSCRIPTION FACTOR DOMAIN-CONTAINING PROTEIN"/>
    <property type="match status" value="1"/>
</dbReference>
<dbReference type="PANTHER" id="PTHR37534">
    <property type="entry name" value="TRANSCRIPTIONAL ACTIVATOR PROTEIN UGA3"/>
    <property type="match status" value="1"/>
</dbReference>
<dbReference type="Pfam" id="PF11951">
    <property type="entry name" value="Fungal_trans_2"/>
    <property type="match status" value="1"/>
</dbReference>
<reference key="1">
    <citation type="journal article" date="2018" name="ACS Chem. Biol.">
        <title>Characterization of a prenyltransferase for iso-A82775C biosynthesis and generation of new congeners of chloropestolides.</title>
        <authorList>
            <person name="Pan Y."/>
            <person name="Liu L."/>
            <person name="Guan F."/>
            <person name="Li E."/>
            <person name="Jin J."/>
            <person name="Li J."/>
            <person name="Che Y."/>
            <person name="Liu G."/>
        </authorList>
    </citation>
    <scope>NUCLEOTIDE SEQUENCE [GENOMIC DNA]</scope>
    <scope>FUNCTION</scope>
    <scope>BIOTECHNOLOGY</scope>
    <source>
        <strain>W106-1 / CGMCC3.15140</strain>
    </source>
</reference>
<reference key="2">
    <citation type="journal article" date="2015" name="BMC Genomics">
        <title>Genomic and transcriptomic analysis of the endophytic fungus Pestalotiopsis fici reveals its lifestyle and high potential for synthesis of natural products.</title>
        <authorList>
            <person name="Wang X."/>
            <person name="Zhang X."/>
            <person name="Liu L."/>
            <person name="Xiang M."/>
            <person name="Wang W."/>
            <person name="Sun X."/>
            <person name="Che Y."/>
            <person name="Guo L."/>
            <person name="Liu G."/>
            <person name="Guo L."/>
            <person name="Wang C."/>
            <person name="Yin W.B."/>
            <person name="Stadler M."/>
            <person name="Zhang X."/>
            <person name="Liu X."/>
        </authorList>
    </citation>
    <scope>NUCLEOTIDE SEQUENCE [LARGE SCALE GENOMIC DNA]</scope>
    <source>
        <strain>W106-1 / CGMCC3.15140</strain>
    </source>
</reference>